<sequence>MLTMGTALSQQVDANWQTYIMIAVYFLILIVIGFYGYKQATGNLSEYMLGGRSIGPYITALSAGASDMSGWMIMGLPGSVYSTGLSAMWITIGLTLGAYINYFVVAPRLRVYTELAGDAITLPDFFKNRLNDKNNVLKIISGLIIVVFFTLYTHSGFVSGGKLFESAFGLDYHFGLILVAFIVIFYTFFGGYLAVSITDFFQGVIMLIAMVMVPIVAMMNLNGWGTFHDVAAMKPTNLNLFKGLSFIGIISLFSWGLGYFGQPHIIVRFMSIKSHKMLPKARRLGISWMAVGLLGAVAVGLTGIAFVPAYHIKLEDPETLFIVMSQVLFHPLVGGFLLAAILAAIMSTISSQLLVTSSSLTEDFYKLIRGEEKAKTHQKEFVMIGRLSVLVVAIVAIAIAWNPNDTILNLVGNAWAGFGASFSPLVLFALYWKGLTRAGAVSGMVSGALVVIVWIAWIKPLAHINEIFGLYEIIPGFIVSVIVTYVVSKLTKKPGAFVETDLNKVRDIVREK</sequence>
<protein>
    <recommendedName>
        <fullName>Sodium/proline symporter</fullName>
    </recommendedName>
    <alternativeName>
        <fullName>Proline permease</fullName>
    </alternativeName>
</protein>
<accession>Q6G831</accession>
<organism>
    <name type="scientific">Staphylococcus aureus (strain MSSA476)</name>
    <dbReference type="NCBI Taxonomy" id="282459"/>
    <lineage>
        <taxon>Bacteria</taxon>
        <taxon>Bacillati</taxon>
        <taxon>Bacillota</taxon>
        <taxon>Bacilli</taxon>
        <taxon>Bacillales</taxon>
        <taxon>Staphylococcaceae</taxon>
        <taxon>Staphylococcus</taxon>
    </lineage>
</organism>
<gene>
    <name type="primary">putP</name>
    <name type="ordered locus">SAS1825</name>
</gene>
<evidence type="ECO:0000250" key="1">
    <source>
        <dbReference type="UniProtKB" id="P07117"/>
    </source>
</evidence>
<evidence type="ECO:0000250" key="2">
    <source>
        <dbReference type="UniProtKB" id="Q2FWY7"/>
    </source>
</evidence>
<evidence type="ECO:0000255" key="3"/>
<evidence type="ECO:0000305" key="4"/>
<keyword id="KW-0029">Amino-acid transport</keyword>
<keyword id="KW-1003">Cell membrane</keyword>
<keyword id="KW-0406">Ion transport</keyword>
<keyword id="KW-0472">Membrane</keyword>
<keyword id="KW-0915">Sodium</keyword>
<keyword id="KW-0739">Sodium transport</keyword>
<keyword id="KW-0769">Symport</keyword>
<keyword id="KW-0812">Transmembrane</keyword>
<keyword id="KW-1133">Transmembrane helix</keyword>
<keyword id="KW-0813">Transport</keyword>
<reference key="1">
    <citation type="journal article" date="2004" name="Proc. Natl. Acad. Sci. U.S.A.">
        <title>Complete genomes of two clinical Staphylococcus aureus strains: evidence for the rapid evolution of virulence and drug resistance.</title>
        <authorList>
            <person name="Holden M.T.G."/>
            <person name="Feil E.J."/>
            <person name="Lindsay J.A."/>
            <person name="Peacock S.J."/>
            <person name="Day N.P.J."/>
            <person name="Enright M.C."/>
            <person name="Foster T.J."/>
            <person name="Moore C.E."/>
            <person name="Hurst L."/>
            <person name="Atkin R."/>
            <person name="Barron A."/>
            <person name="Bason N."/>
            <person name="Bentley S.D."/>
            <person name="Chillingworth C."/>
            <person name="Chillingworth T."/>
            <person name="Churcher C."/>
            <person name="Clark L."/>
            <person name="Corton C."/>
            <person name="Cronin A."/>
            <person name="Doggett J."/>
            <person name="Dowd L."/>
            <person name="Feltwell T."/>
            <person name="Hance Z."/>
            <person name="Harris B."/>
            <person name="Hauser H."/>
            <person name="Holroyd S."/>
            <person name="Jagels K."/>
            <person name="James K.D."/>
            <person name="Lennard N."/>
            <person name="Line A."/>
            <person name="Mayes R."/>
            <person name="Moule S."/>
            <person name="Mungall K."/>
            <person name="Ormond D."/>
            <person name="Quail M.A."/>
            <person name="Rabbinowitsch E."/>
            <person name="Rutherford K.M."/>
            <person name="Sanders M."/>
            <person name="Sharp S."/>
            <person name="Simmonds M."/>
            <person name="Stevens K."/>
            <person name="Whitehead S."/>
            <person name="Barrell B.G."/>
            <person name="Spratt B.G."/>
            <person name="Parkhill J."/>
        </authorList>
    </citation>
    <scope>NUCLEOTIDE SEQUENCE [LARGE SCALE GENOMIC DNA]</scope>
    <source>
        <strain>MSSA476</strain>
    </source>
</reference>
<proteinExistence type="inferred from homology"/>
<dbReference type="EMBL" id="BX571857">
    <property type="protein sequence ID" value="CAG43630.1"/>
    <property type="molecule type" value="Genomic_DNA"/>
</dbReference>
<dbReference type="RefSeq" id="WP_000957020.1">
    <property type="nucleotide sequence ID" value="NC_002953.3"/>
</dbReference>
<dbReference type="SMR" id="Q6G831"/>
<dbReference type="KEGG" id="sas:SAS1825"/>
<dbReference type="HOGENOM" id="CLU_018808_15_2_9"/>
<dbReference type="GO" id="GO:0005886">
    <property type="term" value="C:plasma membrane"/>
    <property type="evidence" value="ECO:0007669"/>
    <property type="project" value="UniProtKB-SubCell"/>
</dbReference>
<dbReference type="GO" id="GO:0015193">
    <property type="term" value="F:L-proline transmembrane transporter activity"/>
    <property type="evidence" value="ECO:0007669"/>
    <property type="project" value="TreeGrafter"/>
</dbReference>
<dbReference type="GO" id="GO:0005298">
    <property type="term" value="F:proline:sodium symporter activity"/>
    <property type="evidence" value="ECO:0007669"/>
    <property type="project" value="InterPro"/>
</dbReference>
<dbReference type="GO" id="GO:0031402">
    <property type="term" value="F:sodium ion binding"/>
    <property type="evidence" value="ECO:0007669"/>
    <property type="project" value="InterPro"/>
</dbReference>
<dbReference type="GO" id="GO:0015824">
    <property type="term" value="P:proline transport"/>
    <property type="evidence" value="ECO:0007669"/>
    <property type="project" value="InterPro"/>
</dbReference>
<dbReference type="CDD" id="cd11475">
    <property type="entry name" value="SLC5sbd_PutP"/>
    <property type="match status" value="1"/>
</dbReference>
<dbReference type="FunFam" id="1.20.1730.10:FF:000002">
    <property type="entry name" value="Sodium/proline symporter"/>
    <property type="match status" value="1"/>
</dbReference>
<dbReference type="Gene3D" id="1.20.1730.10">
    <property type="entry name" value="Sodium/glucose cotransporter"/>
    <property type="match status" value="1"/>
</dbReference>
<dbReference type="InterPro" id="IPR038377">
    <property type="entry name" value="Na/Glc_symporter_sf"/>
</dbReference>
<dbReference type="InterPro" id="IPR011851">
    <property type="entry name" value="Na/Pro_symporter"/>
</dbReference>
<dbReference type="InterPro" id="IPR001734">
    <property type="entry name" value="Na/solute_symporter"/>
</dbReference>
<dbReference type="InterPro" id="IPR050277">
    <property type="entry name" value="Sodium:Solute_Symporter"/>
</dbReference>
<dbReference type="NCBIfam" id="TIGR02121">
    <property type="entry name" value="Na_Pro_sym"/>
    <property type="match status" value="1"/>
</dbReference>
<dbReference type="NCBIfam" id="TIGR00813">
    <property type="entry name" value="sss"/>
    <property type="match status" value="1"/>
</dbReference>
<dbReference type="PANTHER" id="PTHR48086">
    <property type="entry name" value="SODIUM/PROLINE SYMPORTER-RELATED"/>
    <property type="match status" value="1"/>
</dbReference>
<dbReference type="PANTHER" id="PTHR48086:SF3">
    <property type="entry name" value="SODIUM_PROLINE SYMPORTER"/>
    <property type="match status" value="1"/>
</dbReference>
<dbReference type="Pfam" id="PF00474">
    <property type="entry name" value="SSF"/>
    <property type="match status" value="1"/>
</dbReference>
<dbReference type="PROSITE" id="PS50283">
    <property type="entry name" value="NA_SOLUT_SYMP_3"/>
    <property type="match status" value="1"/>
</dbReference>
<feature type="chain" id="PRO_0000364097" description="Sodium/proline symporter">
    <location>
        <begin position="1"/>
        <end position="512"/>
    </location>
</feature>
<feature type="transmembrane region" description="Helical" evidence="3">
    <location>
        <begin position="16"/>
        <end position="36"/>
    </location>
</feature>
<feature type="transmembrane region" description="Helical" evidence="3">
    <location>
        <begin position="54"/>
        <end position="74"/>
    </location>
</feature>
<feature type="transmembrane region" description="Helical" evidence="3">
    <location>
        <begin position="85"/>
        <end position="105"/>
    </location>
</feature>
<feature type="transmembrane region" description="Helical" evidence="3">
    <location>
        <begin position="139"/>
        <end position="159"/>
    </location>
</feature>
<feature type="transmembrane region" description="Helical" evidence="3">
    <location>
        <begin position="174"/>
        <end position="194"/>
    </location>
</feature>
<feature type="transmembrane region" description="Helical" evidence="3">
    <location>
        <begin position="200"/>
        <end position="220"/>
    </location>
</feature>
<feature type="transmembrane region" description="Helical" evidence="3">
    <location>
        <begin position="240"/>
        <end position="260"/>
    </location>
</feature>
<feature type="transmembrane region" description="Helical" evidence="3">
    <location>
        <begin position="286"/>
        <end position="306"/>
    </location>
</feature>
<feature type="transmembrane region" description="Helical" evidence="3">
    <location>
        <begin position="327"/>
        <end position="347"/>
    </location>
</feature>
<feature type="transmembrane region" description="Helical" evidence="3">
    <location>
        <begin position="381"/>
        <end position="401"/>
    </location>
</feature>
<feature type="transmembrane region" description="Helical" evidence="3">
    <location>
        <begin position="410"/>
        <end position="430"/>
    </location>
</feature>
<feature type="transmembrane region" description="Helical" evidence="3">
    <location>
        <begin position="438"/>
        <end position="458"/>
    </location>
</feature>
<feature type="transmembrane region" description="Helical" evidence="3">
    <location>
        <begin position="467"/>
        <end position="487"/>
    </location>
</feature>
<comment type="function">
    <text evidence="1 2">Catalyzes the sodium-dependent uptake of extracellular L-proline (By similarity). Since most S.aureus strains are L-proline auxotrophs, this transporter may aid the bacterial persistence during an infection of tissues with low proline concentrations (By similarity).</text>
</comment>
<comment type="catalytic activity">
    <reaction evidence="1">
        <text>L-proline(in) + Na(+)(in) = L-proline(out) + Na(+)(out)</text>
        <dbReference type="Rhea" id="RHEA:28967"/>
        <dbReference type="ChEBI" id="CHEBI:29101"/>
        <dbReference type="ChEBI" id="CHEBI:60039"/>
    </reaction>
</comment>
<comment type="subcellular location">
    <subcellularLocation>
        <location evidence="4">Cell membrane</location>
        <topology evidence="3">Multi-pass membrane protein</topology>
    </subcellularLocation>
</comment>
<comment type="similarity">
    <text evidence="4">Belongs to the sodium:solute symporter (SSF) (TC 2.A.21) family.</text>
</comment>
<name>PUTP_STAAS</name>